<organism>
    <name type="scientific">Escherichia coli (strain ATCC 8739 / DSM 1576 / NBRC 3972 / NCIMB 8545 / WDCM 00012 / Crooks)</name>
    <dbReference type="NCBI Taxonomy" id="481805"/>
    <lineage>
        <taxon>Bacteria</taxon>
        <taxon>Pseudomonadati</taxon>
        <taxon>Pseudomonadota</taxon>
        <taxon>Gammaproteobacteria</taxon>
        <taxon>Enterobacterales</taxon>
        <taxon>Enterobacteriaceae</taxon>
        <taxon>Escherichia</taxon>
    </lineage>
</organism>
<name>LSRC_ECOLC</name>
<feature type="chain" id="PRO_0000351337" description="Autoinducer 2 import system permease protein LsrC">
    <location>
        <begin position="1"/>
        <end position="342"/>
    </location>
</feature>
<feature type="topological domain" description="Periplasmic" evidence="2">
    <location>
        <begin position="1"/>
        <end position="13"/>
    </location>
</feature>
<feature type="transmembrane region" description="Helical" evidence="2">
    <location>
        <begin position="14"/>
        <end position="34"/>
    </location>
</feature>
<feature type="topological domain" description="Cytoplasmic" evidence="2">
    <location>
        <begin position="35"/>
        <end position="38"/>
    </location>
</feature>
<feature type="transmembrane region" description="Helical" evidence="2">
    <location>
        <begin position="39"/>
        <end position="59"/>
    </location>
</feature>
<feature type="topological domain" description="Periplasmic" evidence="2">
    <location>
        <begin position="60"/>
        <end position="69"/>
    </location>
</feature>
<feature type="transmembrane region" description="Helical" evidence="2">
    <location>
        <begin position="70"/>
        <end position="90"/>
    </location>
</feature>
<feature type="topological domain" description="Cytoplasmic" evidence="2">
    <location>
        <begin position="91"/>
        <end position="92"/>
    </location>
</feature>
<feature type="transmembrane region" description="Helical" evidence="2">
    <location>
        <begin position="93"/>
        <end position="113"/>
    </location>
</feature>
<feature type="topological domain" description="Periplasmic" evidence="2">
    <location>
        <position position="114"/>
    </location>
</feature>
<feature type="transmembrane region" description="Helical" evidence="2">
    <location>
        <begin position="115"/>
        <end position="135"/>
    </location>
</feature>
<feature type="topological domain" description="Cytoplasmic" evidence="2">
    <location>
        <begin position="136"/>
        <end position="154"/>
    </location>
</feature>
<feature type="transmembrane region" description="Helical" evidence="2">
    <location>
        <begin position="155"/>
        <end position="175"/>
    </location>
</feature>
<feature type="topological domain" description="Periplasmic" evidence="2">
    <location>
        <begin position="176"/>
        <end position="212"/>
    </location>
</feature>
<feature type="transmembrane region" description="Helical" evidence="2">
    <location>
        <begin position="213"/>
        <end position="233"/>
    </location>
</feature>
<feature type="topological domain" description="Cytoplasmic" evidence="2">
    <location>
        <begin position="234"/>
        <end position="251"/>
    </location>
</feature>
<feature type="transmembrane region" description="Helical" evidence="2">
    <location>
        <begin position="252"/>
        <end position="272"/>
    </location>
</feature>
<feature type="topological domain" description="Periplasmic" evidence="2">
    <location>
        <begin position="273"/>
        <end position="283"/>
    </location>
</feature>
<feature type="transmembrane region" description="Helical" evidence="2">
    <location>
        <begin position="284"/>
        <end position="304"/>
    </location>
</feature>
<feature type="topological domain" description="Cytoplasmic" evidence="2">
    <location>
        <begin position="305"/>
        <end position="342"/>
    </location>
</feature>
<protein>
    <recommendedName>
        <fullName>Autoinducer 2 import system permease protein LsrC</fullName>
        <shortName>AI-2 import system permease protein LsrC</shortName>
    </recommendedName>
</protein>
<accession>B1IRU6</accession>
<dbReference type="EMBL" id="CP000946">
    <property type="protein sequence ID" value="ACA77784.1"/>
    <property type="molecule type" value="Genomic_DNA"/>
</dbReference>
<dbReference type="RefSeq" id="WP_000911192.1">
    <property type="nucleotide sequence ID" value="NZ_MTFT01000006.1"/>
</dbReference>
<dbReference type="KEGG" id="ecl:EcolC_2144"/>
<dbReference type="HOGENOM" id="CLU_028880_0_1_6"/>
<dbReference type="GO" id="GO:0005886">
    <property type="term" value="C:plasma membrane"/>
    <property type="evidence" value="ECO:0007669"/>
    <property type="project" value="UniProtKB-SubCell"/>
</dbReference>
<dbReference type="GO" id="GO:0022857">
    <property type="term" value="F:transmembrane transporter activity"/>
    <property type="evidence" value="ECO:0007669"/>
    <property type="project" value="InterPro"/>
</dbReference>
<dbReference type="CDD" id="cd06579">
    <property type="entry name" value="TM_PBP1_transp_AraH_like"/>
    <property type="match status" value="1"/>
</dbReference>
<dbReference type="InterPro" id="IPR001851">
    <property type="entry name" value="ABC_transp_permease"/>
</dbReference>
<dbReference type="NCBIfam" id="NF011961">
    <property type="entry name" value="PRK15432.1"/>
    <property type="match status" value="1"/>
</dbReference>
<dbReference type="PANTHER" id="PTHR32196">
    <property type="entry name" value="ABC TRANSPORTER PERMEASE PROTEIN YPHD-RELATED-RELATED"/>
    <property type="match status" value="1"/>
</dbReference>
<dbReference type="PANTHER" id="PTHR32196:SF29">
    <property type="entry name" value="AUTOINDUCER 2 IMPORT SYSTEM PERMEASE PROTEIN LSRC"/>
    <property type="match status" value="1"/>
</dbReference>
<dbReference type="Pfam" id="PF02653">
    <property type="entry name" value="BPD_transp_2"/>
    <property type="match status" value="1"/>
</dbReference>
<keyword id="KW-0997">Cell inner membrane</keyword>
<keyword id="KW-1003">Cell membrane</keyword>
<keyword id="KW-0472">Membrane</keyword>
<keyword id="KW-0812">Transmembrane</keyword>
<keyword id="KW-1133">Transmembrane helix</keyword>
<keyword id="KW-0813">Transport</keyword>
<gene>
    <name type="primary">lsrC</name>
    <name type="ordered locus">EcolC_2144</name>
</gene>
<proteinExistence type="inferred from homology"/>
<sequence>MLKFIQNNREITALLAVVLLFVLPGFLDRQYLSVQTLTMVYSSAQILILLAMGATLVMLTRNIDVSVGSITGMCAVLLGMLLNAGYSLPVACVTTLLLGLLAGFFNGVLVAWLKIPAIVATLGTLGLYRGIMLLWTGGKWIEGLPAELKQLSAPLLFGVSAIGWLTIILVAFMAWLLAKTAFGRSFYATGDNLQGARQLGVRTEAIRIVAFSLNGCMAALAGIVFASQIGFIPNQTGTGLEMKAIAACVLGGISLLGGSGAIIGAVLGAWFLTQIDSVLVLLRIPAWWNDFIAGLVLLAVLVFDGRLRCALERNLRRQKYARFMTPPPSVKPASSGKKREAA</sequence>
<comment type="function">
    <text evidence="1">Part of the ABC transporter complex LsrABCD involved in autoinducer 2 (AI-2) import. Probably responsible for the translocation of the substrate across the membrane (By similarity).</text>
</comment>
<comment type="subunit">
    <text evidence="1">The complex is composed of two ATP-binding proteins (LsrA), two transmembrane proteins (LsrC and LsrD) and a solute-binding protein (LsrB).</text>
</comment>
<comment type="subcellular location">
    <subcellularLocation>
        <location evidence="1">Cell inner membrane</location>
        <topology evidence="1">Multi-pass membrane protein</topology>
    </subcellularLocation>
</comment>
<comment type="similarity">
    <text evidence="3">Belongs to the binding-protein-dependent transport system permease family. AraH/RbsC subfamily.</text>
</comment>
<reference key="1">
    <citation type="submission" date="2008-02" db="EMBL/GenBank/DDBJ databases">
        <title>Complete sequence of Escherichia coli C str. ATCC 8739.</title>
        <authorList>
            <person name="Copeland A."/>
            <person name="Lucas S."/>
            <person name="Lapidus A."/>
            <person name="Glavina del Rio T."/>
            <person name="Dalin E."/>
            <person name="Tice H."/>
            <person name="Bruce D."/>
            <person name="Goodwin L."/>
            <person name="Pitluck S."/>
            <person name="Kiss H."/>
            <person name="Brettin T."/>
            <person name="Detter J.C."/>
            <person name="Han C."/>
            <person name="Kuske C.R."/>
            <person name="Schmutz J."/>
            <person name="Larimer F."/>
            <person name="Land M."/>
            <person name="Hauser L."/>
            <person name="Kyrpides N."/>
            <person name="Mikhailova N."/>
            <person name="Ingram L."/>
            <person name="Richardson P."/>
        </authorList>
    </citation>
    <scope>NUCLEOTIDE SEQUENCE [LARGE SCALE GENOMIC DNA]</scope>
    <source>
        <strain>ATCC 8739 / DSM 1576 / NBRC 3972 / NCIMB 8545 / WDCM 00012 / Crooks</strain>
    </source>
</reference>
<evidence type="ECO:0000250" key="1"/>
<evidence type="ECO:0000255" key="2"/>
<evidence type="ECO:0000305" key="3"/>